<proteinExistence type="inferred from homology"/>
<reference key="1">
    <citation type="journal article" date="2009" name="PLoS ONE">
        <title>Complete genome sequence of Francisella tularensis subspecies holarctica FTNF002-00.</title>
        <authorList>
            <person name="Barabote R.D."/>
            <person name="Xie G."/>
            <person name="Brettin T.S."/>
            <person name="Hinrichs S.H."/>
            <person name="Fey P.D."/>
            <person name="Jay J.J."/>
            <person name="Engle J.L."/>
            <person name="Godbole S.D."/>
            <person name="Noronha J.M."/>
            <person name="Scheuermann R.H."/>
            <person name="Zhou L.W."/>
            <person name="Lion C."/>
            <person name="Dempsey M.P."/>
        </authorList>
    </citation>
    <scope>NUCLEOTIDE SEQUENCE [LARGE SCALE GENOMIC DNA]</scope>
    <source>
        <strain>FTNF002-00 / FTA</strain>
    </source>
</reference>
<accession>A7NAN4</accession>
<dbReference type="EC" id="3.2.2.27" evidence="1"/>
<dbReference type="EMBL" id="CP000803">
    <property type="protein sequence ID" value="ABU61037.1"/>
    <property type="molecule type" value="Genomic_DNA"/>
</dbReference>
<dbReference type="RefSeq" id="WP_003014844.1">
    <property type="nucleotide sequence ID" value="NC_009749.1"/>
</dbReference>
<dbReference type="SMR" id="A7NAN4"/>
<dbReference type="KEGG" id="fta:FTA_0561"/>
<dbReference type="HOGENOM" id="CLU_032162_3_1_6"/>
<dbReference type="GO" id="GO:0005737">
    <property type="term" value="C:cytoplasm"/>
    <property type="evidence" value="ECO:0007669"/>
    <property type="project" value="UniProtKB-SubCell"/>
</dbReference>
<dbReference type="GO" id="GO:0004844">
    <property type="term" value="F:uracil DNA N-glycosylase activity"/>
    <property type="evidence" value="ECO:0007669"/>
    <property type="project" value="UniProtKB-UniRule"/>
</dbReference>
<dbReference type="GO" id="GO:0097510">
    <property type="term" value="P:base-excision repair, AP site formation via deaminated base removal"/>
    <property type="evidence" value="ECO:0007669"/>
    <property type="project" value="TreeGrafter"/>
</dbReference>
<dbReference type="CDD" id="cd10027">
    <property type="entry name" value="UDG-F1-like"/>
    <property type="match status" value="1"/>
</dbReference>
<dbReference type="FunFam" id="3.40.470.10:FF:000001">
    <property type="entry name" value="Uracil-DNA glycosylase"/>
    <property type="match status" value="1"/>
</dbReference>
<dbReference type="Gene3D" id="3.40.470.10">
    <property type="entry name" value="Uracil-DNA glycosylase-like domain"/>
    <property type="match status" value="1"/>
</dbReference>
<dbReference type="HAMAP" id="MF_00148">
    <property type="entry name" value="UDG"/>
    <property type="match status" value="1"/>
</dbReference>
<dbReference type="InterPro" id="IPR002043">
    <property type="entry name" value="UDG_fam1"/>
</dbReference>
<dbReference type="InterPro" id="IPR018085">
    <property type="entry name" value="Ura-DNA_Glyclase_AS"/>
</dbReference>
<dbReference type="InterPro" id="IPR005122">
    <property type="entry name" value="Uracil-DNA_glycosylase-like"/>
</dbReference>
<dbReference type="InterPro" id="IPR036895">
    <property type="entry name" value="Uracil-DNA_glycosylase-like_sf"/>
</dbReference>
<dbReference type="NCBIfam" id="NF003588">
    <property type="entry name" value="PRK05254.1-1"/>
    <property type="match status" value="1"/>
</dbReference>
<dbReference type="NCBIfam" id="NF003589">
    <property type="entry name" value="PRK05254.1-2"/>
    <property type="match status" value="1"/>
</dbReference>
<dbReference type="NCBIfam" id="NF003591">
    <property type="entry name" value="PRK05254.1-4"/>
    <property type="match status" value="1"/>
</dbReference>
<dbReference type="NCBIfam" id="NF003592">
    <property type="entry name" value="PRK05254.1-5"/>
    <property type="match status" value="1"/>
</dbReference>
<dbReference type="NCBIfam" id="TIGR00628">
    <property type="entry name" value="ung"/>
    <property type="match status" value="1"/>
</dbReference>
<dbReference type="PANTHER" id="PTHR11264">
    <property type="entry name" value="URACIL-DNA GLYCOSYLASE"/>
    <property type="match status" value="1"/>
</dbReference>
<dbReference type="PANTHER" id="PTHR11264:SF0">
    <property type="entry name" value="URACIL-DNA GLYCOSYLASE"/>
    <property type="match status" value="1"/>
</dbReference>
<dbReference type="Pfam" id="PF03167">
    <property type="entry name" value="UDG"/>
    <property type="match status" value="1"/>
</dbReference>
<dbReference type="SMART" id="SM00986">
    <property type="entry name" value="UDG"/>
    <property type="match status" value="1"/>
</dbReference>
<dbReference type="SMART" id="SM00987">
    <property type="entry name" value="UreE_C"/>
    <property type="match status" value="1"/>
</dbReference>
<dbReference type="SUPFAM" id="SSF52141">
    <property type="entry name" value="Uracil-DNA glycosylase-like"/>
    <property type="match status" value="1"/>
</dbReference>
<dbReference type="PROSITE" id="PS00130">
    <property type="entry name" value="U_DNA_GLYCOSYLASE"/>
    <property type="match status" value="1"/>
</dbReference>
<name>UNG_FRATF</name>
<feature type="chain" id="PRO_1000009889" description="Uracil-DNA glycosylase">
    <location>
        <begin position="1"/>
        <end position="220"/>
    </location>
</feature>
<feature type="active site" description="Proton acceptor" evidence="1">
    <location>
        <position position="60"/>
    </location>
</feature>
<protein>
    <recommendedName>
        <fullName evidence="1">Uracil-DNA glycosylase</fullName>
        <shortName evidence="1">UDG</shortName>
        <ecNumber evidence="1">3.2.2.27</ecNumber>
    </recommendedName>
</protein>
<keyword id="KW-0963">Cytoplasm</keyword>
<keyword id="KW-0227">DNA damage</keyword>
<keyword id="KW-0234">DNA repair</keyword>
<keyword id="KW-0378">Hydrolase</keyword>
<gene>
    <name evidence="1" type="primary">ung</name>
    <name type="ordered locus">FTA_0561</name>
</gene>
<sequence>MTWSDILAEEKQKPYFKQILDFLACESAKGKVIFPTKENIFNAFKYTELDNLKVVILGQDPYHNYNQAHGLAFSVQKWVDIPPSLQNIYKELARSIPKFKTPNHGYLVDWAKQGVFLLNTTLTVEAHKANSHKDIGWETFTDTVINKISENKHNVVFMLWGSHARKKKVLIDSSRHLILESTHPSPLSAHRGFLGCNHFVDCNKYLIEKKDQKIDWNLLC</sequence>
<comment type="function">
    <text evidence="1">Excises uracil residues from the DNA which can arise as a result of misincorporation of dUMP residues by DNA polymerase or due to deamination of cytosine.</text>
</comment>
<comment type="catalytic activity">
    <reaction evidence="1">
        <text>Hydrolyzes single-stranded DNA or mismatched double-stranded DNA and polynucleotides, releasing free uracil.</text>
        <dbReference type="EC" id="3.2.2.27"/>
    </reaction>
</comment>
<comment type="subcellular location">
    <subcellularLocation>
        <location evidence="1">Cytoplasm</location>
    </subcellularLocation>
</comment>
<comment type="similarity">
    <text evidence="1">Belongs to the uracil-DNA glycosylase (UDG) superfamily. UNG family.</text>
</comment>
<organism>
    <name type="scientific">Francisella tularensis subsp. holarctica (strain FTNF002-00 / FTA)</name>
    <dbReference type="NCBI Taxonomy" id="458234"/>
    <lineage>
        <taxon>Bacteria</taxon>
        <taxon>Pseudomonadati</taxon>
        <taxon>Pseudomonadota</taxon>
        <taxon>Gammaproteobacteria</taxon>
        <taxon>Thiotrichales</taxon>
        <taxon>Francisellaceae</taxon>
        <taxon>Francisella</taxon>
    </lineage>
</organism>
<evidence type="ECO:0000255" key="1">
    <source>
        <dbReference type="HAMAP-Rule" id="MF_00148"/>
    </source>
</evidence>